<reference key="1">
    <citation type="submission" date="2009-03" db="EMBL/GenBank/DDBJ databases">
        <title>Comparison of the complete genome sequences of Rhodococcus erythropolis PR4 and Rhodococcus opacus B4.</title>
        <authorList>
            <person name="Takarada H."/>
            <person name="Sekine M."/>
            <person name="Hosoyama A."/>
            <person name="Yamada R."/>
            <person name="Fujisawa T."/>
            <person name="Omata S."/>
            <person name="Shimizu A."/>
            <person name="Tsukatani N."/>
            <person name="Tanikawa S."/>
            <person name="Fujita N."/>
            <person name="Harayama S."/>
        </authorList>
    </citation>
    <scope>NUCLEOTIDE SEQUENCE [LARGE SCALE GENOMIC DNA]</scope>
    <source>
        <strain>B4</strain>
    </source>
</reference>
<sequence>MAEGRGPVVALVPAAGQGVRLGENKPKAFVDLGGTTMLTRAVDGLLQSGAVDRVVVIVPEELVESTRSLLPGHVTVVAGGSERTGSVRAGLAVADDAEYVLVHDAARALTPPSLIARVVAELRCGRRAVIPVLPVADTIKTVDVLGAVTGTPERSELRAVQTPQGFTAELLRRAYAAADGIATDDAGLVERLGERVRSIVGEPTAFKITTPLDLVLARALVEEGAH</sequence>
<protein>
    <recommendedName>
        <fullName evidence="1">2-C-methyl-D-erythritol 4-phosphate cytidylyltransferase</fullName>
        <ecNumber evidence="1">2.7.7.60</ecNumber>
    </recommendedName>
    <alternativeName>
        <fullName evidence="1">4-diphosphocytidyl-2C-methyl-D-erythritol synthase</fullName>
    </alternativeName>
    <alternativeName>
        <fullName evidence="1">MEP cytidylyltransferase</fullName>
        <shortName evidence="1">MCT</shortName>
    </alternativeName>
</protein>
<evidence type="ECO:0000255" key="1">
    <source>
        <dbReference type="HAMAP-Rule" id="MF_00108"/>
    </source>
</evidence>
<comment type="function">
    <text evidence="1">Catalyzes the formation of 4-diphosphocytidyl-2-C-methyl-D-erythritol from CTP and 2-C-methyl-D-erythritol 4-phosphate (MEP).</text>
</comment>
<comment type="catalytic activity">
    <reaction evidence="1">
        <text>2-C-methyl-D-erythritol 4-phosphate + CTP + H(+) = 4-CDP-2-C-methyl-D-erythritol + diphosphate</text>
        <dbReference type="Rhea" id="RHEA:13429"/>
        <dbReference type="ChEBI" id="CHEBI:15378"/>
        <dbReference type="ChEBI" id="CHEBI:33019"/>
        <dbReference type="ChEBI" id="CHEBI:37563"/>
        <dbReference type="ChEBI" id="CHEBI:57823"/>
        <dbReference type="ChEBI" id="CHEBI:58262"/>
        <dbReference type="EC" id="2.7.7.60"/>
    </reaction>
</comment>
<comment type="pathway">
    <text evidence="1">Isoprenoid biosynthesis; isopentenyl diphosphate biosynthesis via DXP pathway; isopentenyl diphosphate from 1-deoxy-D-xylulose 5-phosphate: step 2/6.</text>
</comment>
<comment type="similarity">
    <text evidence="1">Belongs to the IspD/TarI cytidylyltransferase family. IspD subfamily.</text>
</comment>
<proteinExistence type="inferred from homology"/>
<organism>
    <name type="scientific">Rhodococcus opacus (strain B4)</name>
    <dbReference type="NCBI Taxonomy" id="632772"/>
    <lineage>
        <taxon>Bacteria</taxon>
        <taxon>Bacillati</taxon>
        <taxon>Actinomycetota</taxon>
        <taxon>Actinomycetes</taxon>
        <taxon>Mycobacteriales</taxon>
        <taxon>Nocardiaceae</taxon>
        <taxon>Rhodococcus</taxon>
    </lineage>
</organism>
<keyword id="KW-0414">Isoprene biosynthesis</keyword>
<keyword id="KW-0548">Nucleotidyltransferase</keyword>
<keyword id="KW-0808">Transferase</keyword>
<accession>C1BAC2</accession>
<feature type="chain" id="PRO_1000191066" description="2-C-methyl-D-erythritol 4-phosphate cytidylyltransferase">
    <location>
        <begin position="1"/>
        <end position="226"/>
    </location>
</feature>
<feature type="site" description="Transition state stabilizer" evidence="1">
    <location>
        <position position="20"/>
    </location>
</feature>
<feature type="site" description="Transition state stabilizer" evidence="1">
    <location>
        <position position="27"/>
    </location>
</feature>
<feature type="site" description="Positions MEP for the nucleophilic attack" evidence="1">
    <location>
        <position position="154"/>
    </location>
</feature>
<feature type="site" description="Positions MEP for the nucleophilic attack" evidence="1">
    <location>
        <position position="207"/>
    </location>
</feature>
<name>ISPD_RHOOB</name>
<gene>
    <name evidence="1" type="primary">ispD</name>
    <name type="ordered locus">ROP_43780</name>
</gene>
<dbReference type="EC" id="2.7.7.60" evidence="1"/>
<dbReference type="EMBL" id="AP011115">
    <property type="protein sequence ID" value="BAH52625.1"/>
    <property type="molecule type" value="Genomic_DNA"/>
</dbReference>
<dbReference type="RefSeq" id="WP_012691550.1">
    <property type="nucleotide sequence ID" value="NC_012522.1"/>
</dbReference>
<dbReference type="SMR" id="C1BAC2"/>
<dbReference type="STRING" id="632772.ROP_43780"/>
<dbReference type="KEGG" id="rop:ROP_43780"/>
<dbReference type="PATRIC" id="fig|632772.20.peg.4585"/>
<dbReference type="HOGENOM" id="CLU_061281_1_1_11"/>
<dbReference type="OrthoDB" id="9802561at2"/>
<dbReference type="UniPathway" id="UPA00056">
    <property type="reaction ID" value="UER00093"/>
</dbReference>
<dbReference type="Proteomes" id="UP000002212">
    <property type="component" value="Chromosome"/>
</dbReference>
<dbReference type="GO" id="GO:0050518">
    <property type="term" value="F:2-C-methyl-D-erythritol 4-phosphate cytidylyltransferase activity"/>
    <property type="evidence" value="ECO:0007669"/>
    <property type="project" value="UniProtKB-UniRule"/>
</dbReference>
<dbReference type="GO" id="GO:0019288">
    <property type="term" value="P:isopentenyl diphosphate biosynthetic process, methylerythritol 4-phosphate pathway"/>
    <property type="evidence" value="ECO:0007669"/>
    <property type="project" value="UniProtKB-UniRule"/>
</dbReference>
<dbReference type="CDD" id="cd02516">
    <property type="entry name" value="CDP-ME_synthetase"/>
    <property type="match status" value="1"/>
</dbReference>
<dbReference type="FunFam" id="3.90.550.10:FF:000003">
    <property type="entry name" value="2-C-methyl-D-erythritol 4-phosphate cytidylyltransferase"/>
    <property type="match status" value="1"/>
</dbReference>
<dbReference type="Gene3D" id="3.90.550.10">
    <property type="entry name" value="Spore Coat Polysaccharide Biosynthesis Protein SpsA, Chain A"/>
    <property type="match status" value="1"/>
</dbReference>
<dbReference type="HAMAP" id="MF_00108">
    <property type="entry name" value="IspD"/>
    <property type="match status" value="1"/>
</dbReference>
<dbReference type="InterPro" id="IPR001228">
    <property type="entry name" value="IspD"/>
</dbReference>
<dbReference type="InterPro" id="IPR034683">
    <property type="entry name" value="IspD/TarI"/>
</dbReference>
<dbReference type="InterPro" id="IPR050088">
    <property type="entry name" value="IspD/TarI_cytidylyltransf_bact"/>
</dbReference>
<dbReference type="InterPro" id="IPR018294">
    <property type="entry name" value="ISPD_synthase_CS"/>
</dbReference>
<dbReference type="InterPro" id="IPR029044">
    <property type="entry name" value="Nucleotide-diphossugar_trans"/>
</dbReference>
<dbReference type="NCBIfam" id="TIGR00453">
    <property type="entry name" value="ispD"/>
    <property type="match status" value="1"/>
</dbReference>
<dbReference type="PANTHER" id="PTHR32125">
    <property type="entry name" value="2-C-METHYL-D-ERYTHRITOL 4-PHOSPHATE CYTIDYLYLTRANSFERASE, CHLOROPLASTIC"/>
    <property type="match status" value="1"/>
</dbReference>
<dbReference type="PANTHER" id="PTHR32125:SF4">
    <property type="entry name" value="2-C-METHYL-D-ERYTHRITOL 4-PHOSPHATE CYTIDYLYLTRANSFERASE, CHLOROPLASTIC"/>
    <property type="match status" value="1"/>
</dbReference>
<dbReference type="Pfam" id="PF01128">
    <property type="entry name" value="IspD"/>
    <property type="match status" value="1"/>
</dbReference>
<dbReference type="SUPFAM" id="SSF53448">
    <property type="entry name" value="Nucleotide-diphospho-sugar transferases"/>
    <property type="match status" value="1"/>
</dbReference>
<dbReference type="PROSITE" id="PS01295">
    <property type="entry name" value="ISPD"/>
    <property type="match status" value="1"/>
</dbReference>